<organism>
    <name type="scientific">Emericella nidulans (strain FGSC A4 / ATCC 38163 / CBS 112.46 / NRRL 194 / M139)</name>
    <name type="common">Aspergillus nidulans</name>
    <dbReference type="NCBI Taxonomy" id="227321"/>
    <lineage>
        <taxon>Eukaryota</taxon>
        <taxon>Fungi</taxon>
        <taxon>Dikarya</taxon>
        <taxon>Ascomycota</taxon>
        <taxon>Pezizomycotina</taxon>
        <taxon>Eurotiomycetes</taxon>
        <taxon>Eurotiomycetidae</taxon>
        <taxon>Eurotiales</taxon>
        <taxon>Aspergillaceae</taxon>
        <taxon>Aspergillus</taxon>
        <taxon>Aspergillus subgen. Nidulantes</taxon>
    </lineage>
</organism>
<evidence type="ECO:0000250" key="1">
    <source>
        <dbReference type="UniProtKB" id="P38038"/>
    </source>
</evidence>
<evidence type="ECO:0000255" key="2"/>
<evidence type="ECO:0000255" key="3">
    <source>
        <dbReference type="PROSITE-ProRule" id="PRU00279"/>
    </source>
</evidence>
<evidence type="ECO:0000255" key="4">
    <source>
        <dbReference type="PROSITE-ProRule" id="PRU00716"/>
    </source>
</evidence>
<evidence type="ECO:0000269" key="5">
    <source>
    </source>
</evidence>
<evidence type="ECO:0000303" key="6">
    <source>
    </source>
</evidence>
<evidence type="ECO:0000305" key="7"/>
<evidence type="ECO:0000305" key="8">
    <source>
    </source>
</evidence>
<reference key="1">
    <citation type="journal article" date="2005" name="Nature">
        <title>Sequencing of Aspergillus nidulans and comparative analysis with A. fumigatus and A. oryzae.</title>
        <authorList>
            <person name="Galagan J.E."/>
            <person name="Calvo S.E."/>
            <person name="Cuomo C."/>
            <person name="Ma L.-J."/>
            <person name="Wortman J.R."/>
            <person name="Batzoglou S."/>
            <person name="Lee S.-I."/>
            <person name="Bastuerkmen M."/>
            <person name="Spevak C.C."/>
            <person name="Clutterbuck J."/>
            <person name="Kapitonov V."/>
            <person name="Jurka J."/>
            <person name="Scazzocchio C."/>
            <person name="Farman M.L."/>
            <person name="Butler J."/>
            <person name="Purcell S."/>
            <person name="Harris S."/>
            <person name="Braus G.H."/>
            <person name="Draht O."/>
            <person name="Busch S."/>
            <person name="D'Enfert C."/>
            <person name="Bouchier C."/>
            <person name="Goldman G.H."/>
            <person name="Bell-Pedersen D."/>
            <person name="Griffiths-Jones S."/>
            <person name="Doonan J.H."/>
            <person name="Yu J."/>
            <person name="Vienken K."/>
            <person name="Pain A."/>
            <person name="Freitag M."/>
            <person name="Selker E.U."/>
            <person name="Archer D.B."/>
            <person name="Penalva M.A."/>
            <person name="Oakley B.R."/>
            <person name="Momany M."/>
            <person name="Tanaka T."/>
            <person name="Kumagai T."/>
            <person name="Asai K."/>
            <person name="Machida M."/>
            <person name="Nierman W.C."/>
            <person name="Denning D.W."/>
            <person name="Caddick M.X."/>
            <person name="Hynes M."/>
            <person name="Paoletti M."/>
            <person name="Fischer R."/>
            <person name="Miller B.L."/>
            <person name="Dyer P.S."/>
            <person name="Sachs M.S."/>
            <person name="Osmani S.A."/>
            <person name="Birren B.W."/>
        </authorList>
    </citation>
    <scope>NUCLEOTIDE SEQUENCE [LARGE SCALE GENOMIC DNA]</scope>
    <source>
        <strain>FGSC A4 / ATCC 38163 / CBS 112.46 / NRRL 194 / M139</strain>
    </source>
</reference>
<reference key="2">
    <citation type="journal article" date="2009" name="Fungal Genet. Biol.">
        <title>The 2008 update of the Aspergillus nidulans genome annotation: a community effort.</title>
        <authorList>
            <person name="Wortman J.R."/>
            <person name="Gilsenan J.M."/>
            <person name="Joardar V."/>
            <person name="Deegan J."/>
            <person name="Clutterbuck J."/>
            <person name="Andersen M.R."/>
            <person name="Archer D."/>
            <person name="Bencina M."/>
            <person name="Braus G."/>
            <person name="Coutinho P."/>
            <person name="von Dohren H."/>
            <person name="Doonan J."/>
            <person name="Driessen A.J."/>
            <person name="Durek P."/>
            <person name="Espeso E."/>
            <person name="Fekete E."/>
            <person name="Flipphi M."/>
            <person name="Estrada C.G."/>
            <person name="Geysens S."/>
            <person name="Goldman G."/>
            <person name="de Groot P.W."/>
            <person name="Hansen K."/>
            <person name="Harris S.D."/>
            <person name="Heinekamp T."/>
            <person name="Helmstaedt K."/>
            <person name="Henrissat B."/>
            <person name="Hofmann G."/>
            <person name="Homan T."/>
            <person name="Horio T."/>
            <person name="Horiuchi H."/>
            <person name="James S."/>
            <person name="Jones M."/>
            <person name="Karaffa L."/>
            <person name="Karanyi Z."/>
            <person name="Kato M."/>
            <person name="Keller N."/>
            <person name="Kelly D.E."/>
            <person name="Kiel J.A."/>
            <person name="Kim J.M."/>
            <person name="van der Klei I.J."/>
            <person name="Klis F.M."/>
            <person name="Kovalchuk A."/>
            <person name="Krasevec N."/>
            <person name="Kubicek C.P."/>
            <person name="Liu B."/>
            <person name="Maccabe A."/>
            <person name="Meyer V."/>
            <person name="Mirabito P."/>
            <person name="Miskei M."/>
            <person name="Mos M."/>
            <person name="Mullins J."/>
            <person name="Nelson D.R."/>
            <person name="Nielsen J."/>
            <person name="Oakley B.R."/>
            <person name="Osmani S.A."/>
            <person name="Pakula T."/>
            <person name="Paszewski A."/>
            <person name="Paulsen I."/>
            <person name="Pilsyk S."/>
            <person name="Pocsi I."/>
            <person name="Punt P.J."/>
            <person name="Ram A.F."/>
            <person name="Ren Q."/>
            <person name="Robellet X."/>
            <person name="Robson G."/>
            <person name="Seiboth B."/>
            <person name="van Solingen P."/>
            <person name="Specht T."/>
            <person name="Sun J."/>
            <person name="Taheri-Talesh N."/>
            <person name="Takeshita N."/>
            <person name="Ussery D."/>
            <person name="vanKuyk P.A."/>
            <person name="Visser H."/>
            <person name="van de Vondervoort P.J."/>
            <person name="de Vries R.P."/>
            <person name="Walton J."/>
            <person name="Xiang X."/>
            <person name="Xiong Y."/>
            <person name="Zeng A.P."/>
            <person name="Brandt B.W."/>
            <person name="Cornell M.J."/>
            <person name="van den Hondel C.A."/>
            <person name="Visser J."/>
            <person name="Oliver S.G."/>
            <person name="Turner G."/>
        </authorList>
    </citation>
    <scope>GENOME REANNOTATION</scope>
    <source>
        <strain>FGSC A4 / ATCC 38163 / CBS 112.46 / NRRL 194 / M139</strain>
    </source>
</reference>
<reference key="3">
    <citation type="journal article" date="2018" name="ACS Chem. Biol.">
        <title>Hybrid transcription factor engineering activates the silent secondary metabolite gene cluster for (+)-asperlin in Aspergillus nidulans.</title>
        <authorList>
            <person name="Grau M.F."/>
            <person name="Entwistle R."/>
            <person name="Chiang Y.M."/>
            <person name="Ahuja M."/>
            <person name="Oakley C.E."/>
            <person name="Akashi T."/>
            <person name="Wang C.C.C."/>
            <person name="Todd R.B."/>
            <person name="Oakley B.R."/>
        </authorList>
    </citation>
    <scope>IDENTIFICATION</scope>
    <scope>DISRUPTION PHENOTYPE</scope>
    <scope>FUNCTION</scope>
    <scope>INDUCTION</scope>
    <scope>PATHWAY</scope>
</reference>
<keyword id="KW-0274">FAD</keyword>
<keyword id="KW-0285">Flavoprotein</keyword>
<keyword id="KW-0288">FMN</keyword>
<keyword id="KW-0349">Heme</keyword>
<keyword id="KW-0408">Iron</keyword>
<keyword id="KW-0472">Membrane</keyword>
<keyword id="KW-0479">Metal-binding</keyword>
<keyword id="KW-0521">NADP</keyword>
<keyword id="KW-0560">Oxidoreductase</keyword>
<keyword id="KW-1185">Reference proteome</keyword>
<keyword id="KW-0812">Transmembrane</keyword>
<keyword id="KW-1133">Transmembrane helix</keyword>
<proteinExistence type="evidence at transcript level"/>
<sequence>MASPASITLAEVARHSSPNDLWIVIEGNVYDVAEYREDHPGGDEILRQFAGKDATTEFQDAGHSNDAYVKLKTLLVGSLQSKTLPENQPEESSRIVSIAVSDRGKIPTKRQARNGNDTSKYGQLPSLVLAGGLALLFFTLKQHPWQSIQGYLSQAQVSRVQSSGWVGFLGGFLTATTLNTAAATFVGLTAKKTLLLRHRELEEYPRVKQHYLPLPPKKPGISGENTQQFLTLVDRQCIAPNVYKVRLQGDGLVIGLGQHLKVLAEIDGRKIQRSYTPVSPVGNSPKVDLIIKVYPKGQLGNYLLNLPLQSRVEIRGPFGRYSPSPTWKHIACIAGGTGIAPIYQVMRAWPGEITLLYGNETWEDILLREELEQLVLQSPRRIKVHHVLGQPKSDWKGLRGWITREMIQDLLPEPSSSTGFLVCGPDGMVRAIRGHFEAIDANGEEKANVFVF</sequence>
<dbReference type="EC" id="1.6.2.-" evidence="8"/>
<dbReference type="EMBL" id="BN001306">
    <property type="protein sequence ID" value="CBF82301.1"/>
    <property type="molecule type" value="Genomic_DNA"/>
</dbReference>
<dbReference type="SMR" id="C8VJR5"/>
<dbReference type="STRING" id="227321.C8VJR5"/>
<dbReference type="EnsemblFungi" id="CBF82301">
    <property type="protein sequence ID" value="CBF82301"/>
    <property type="gene ID" value="ANIA_11198"/>
</dbReference>
<dbReference type="VEuPathDB" id="FungiDB:AN11198"/>
<dbReference type="eggNOG" id="KOG0534">
    <property type="taxonomic scope" value="Eukaryota"/>
</dbReference>
<dbReference type="eggNOG" id="KOG0537">
    <property type="taxonomic scope" value="Eukaryota"/>
</dbReference>
<dbReference type="HOGENOM" id="CLU_003827_0_1_1"/>
<dbReference type="InParanoid" id="C8VJR5"/>
<dbReference type="OrthoDB" id="432685at2759"/>
<dbReference type="Proteomes" id="UP000000560">
    <property type="component" value="Chromosome VI"/>
</dbReference>
<dbReference type="GO" id="GO:0016020">
    <property type="term" value="C:membrane"/>
    <property type="evidence" value="ECO:0007669"/>
    <property type="project" value="UniProtKB-SubCell"/>
</dbReference>
<dbReference type="GO" id="GO:0046872">
    <property type="term" value="F:metal ion binding"/>
    <property type="evidence" value="ECO:0007669"/>
    <property type="project" value="UniProtKB-KW"/>
</dbReference>
<dbReference type="GO" id="GO:0016491">
    <property type="term" value="F:oxidoreductase activity"/>
    <property type="evidence" value="ECO:0007669"/>
    <property type="project" value="UniProtKB-KW"/>
</dbReference>
<dbReference type="CDD" id="cd06183">
    <property type="entry name" value="cyt_b5_reduct_like"/>
    <property type="match status" value="1"/>
</dbReference>
<dbReference type="Gene3D" id="3.10.120.10">
    <property type="entry name" value="Cytochrome b5-like heme/steroid binding domain"/>
    <property type="match status" value="1"/>
</dbReference>
<dbReference type="Gene3D" id="3.40.50.80">
    <property type="entry name" value="Nucleotide-binding domain of ferredoxin-NADP reductase (FNR) module"/>
    <property type="match status" value="1"/>
</dbReference>
<dbReference type="Gene3D" id="2.40.30.10">
    <property type="entry name" value="Translation factors"/>
    <property type="match status" value="1"/>
</dbReference>
<dbReference type="InterPro" id="IPR001834">
    <property type="entry name" value="CBR-like"/>
</dbReference>
<dbReference type="InterPro" id="IPR008333">
    <property type="entry name" value="Cbr1-like_FAD-bd_dom"/>
</dbReference>
<dbReference type="InterPro" id="IPR001199">
    <property type="entry name" value="Cyt_B5-like_heme/steroid-bd"/>
</dbReference>
<dbReference type="InterPro" id="IPR036400">
    <property type="entry name" value="Cyt_B5-like_heme/steroid_sf"/>
</dbReference>
<dbReference type="InterPro" id="IPR017927">
    <property type="entry name" value="FAD-bd_FR_type"/>
</dbReference>
<dbReference type="InterPro" id="IPR039261">
    <property type="entry name" value="FNR_nucleotide-bd"/>
</dbReference>
<dbReference type="InterPro" id="IPR001433">
    <property type="entry name" value="OxRdtase_FAD/NAD-bd"/>
</dbReference>
<dbReference type="InterPro" id="IPR017938">
    <property type="entry name" value="Riboflavin_synthase-like_b-brl"/>
</dbReference>
<dbReference type="PANTHER" id="PTHR19370">
    <property type="entry name" value="NADH-CYTOCHROME B5 REDUCTASE"/>
    <property type="match status" value="1"/>
</dbReference>
<dbReference type="PANTHER" id="PTHR19370:SF184">
    <property type="entry name" value="NADH-CYTOCHROME B5 REDUCTASE-LIKE"/>
    <property type="match status" value="1"/>
</dbReference>
<dbReference type="Pfam" id="PF00173">
    <property type="entry name" value="Cyt-b5"/>
    <property type="match status" value="1"/>
</dbReference>
<dbReference type="Pfam" id="PF00970">
    <property type="entry name" value="FAD_binding_6"/>
    <property type="match status" value="1"/>
</dbReference>
<dbReference type="Pfam" id="PF00175">
    <property type="entry name" value="NAD_binding_1"/>
    <property type="match status" value="1"/>
</dbReference>
<dbReference type="PRINTS" id="PR00406">
    <property type="entry name" value="CYTB5RDTASE"/>
</dbReference>
<dbReference type="PRINTS" id="PR00363">
    <property type="entry name" value="CYTOCHROMEB5"/>
</dbReference>
<dbReference type="SMART" id="SM01117">
    <property type="entry name" value="Cyt-b5"/>
    <property type="match status" value="1"/>
</dbReference>
<dbReference type="SUPFAM" id="SSF55856">
    <property type="entry name" value="Cytochrome b5-like heme/steroid binding domain"/>
    <property type="match status" value="1"/>
</dbReference>
<dbReference type="SUPFAM" id="SSF52343">
    <property type="entry name" value="Ferredoxin reductase-like, C-terminal NADP-linked domain"/>
    <property type="match status" value="1"/>
</dbReference>
<dbReference type="SUPFAM" id="SSF63380">
    <property type="entry name" value="Riboflavin synthase domain-like"/>
    <property type="match status" value="1"/>
</dbReference>
<dbReference type="PROSITE" id="PS50255">
    <property type="entry name" value="CYTOCHROME_B5_2"/>
    <property type="match status" value="1"/>
</dbReference>
<dbReference type="PROSITE" id="PS51384">
    <property type="entry name" value="FAD_FR"/>
    <property type="match status" value="1"/>
</dbReference>
<name>ALNC_EMENI</name>
<gene>
    <name evidence="6" type="primary">alnC</name>
    <name type="ORF">ANIA_11198</name>
</gene>
<feature type="chain" id="PRO_0000445941" description="NADH-cytochrome b5 reductase-like protein alnC">
    <location>
        <begin position="1"/>
        <end position="452"/>
    </location>
</feature>
<feature type="transmembrane region" description="Helical" evidence="2">
    <location>
        <begin position="120"/>
        <end position="140"/>
    </location>
</feature>
<feature type="transmembrane region" description="Helical" evidence="2">
    <location>
        <begin position="166"/>
        <end position="186"/>
    </location>
</feature>
<feature type="domain" description="Cytochrome b5 heme-binding" evidence="3">
    <location>
        <begin position="4"/>
        <end position="80"/>
    </location>
</feature>
<feature type="domain" description="FAD-binding FR-type" evidence="4">
    <location>
        <begin position="225"/>
        <end position="324"/>
    </location>
</feature>
<feature type="binding site" evidence="1">
    <location>
        <begin position="33"/>
        <end position="38"/>
    </location>
    <ligand>
        <name>FMN</name>
        <dbReference type="ChEBI" id="CHEBI:58210"/>
    </ligand>
</feature>
<feature type="binding site" description="axial binding residue" evidence="3">
    <location>
        <position position="39"/>
    </location>
    <ligand>
        <name>heme</name>
        <dbReference type="ChEBI" id="CHEBI:30413"/>
    </ligand>
    <ligandPart>
        <name>Fe</name>
        <dbReference type="ChEBI" id="CHEBI:18248"/>
    </ligandPart>
</feature>
<feature type="binding site" description="axial binding residue" evidence="3">
    <location>
        <position position="63"/>
    </location>
    <ligand>
        <name>heme</name>
        <dbReference type="ChEBI" id="CHEBI:30413"/>
    </ligand>
    <ligandPart>
        <name>Fe</name>
        <dbReference type="ChEBI" id="CHEBI:18248"/>
    </ligandPart>
</feature>
<feature type="binding site" evidence="1">
    <location>
        <begin position="80"/>
        <end position="83"/>
    </location>
    <ligand>
        <name>FMN</name>
        <dbReference type="ChEBI" id="CHEBI:58210"/>
    </ligand>
</feature>
<feature type="binding site" evidence="1">
    <location>
        <begin position="116"/>
        <end position="125"/>
    </location>
    <ligand>
        <name>FMN</name>
        <dbReference type="ChEBI" id="CHEBI:58210"/>
    </ligand>
</feature>
<feature type="binding site" evidence="1">
    <location>
        <begin position="302"/>
        <end position="305"/>
    </location>
    <ligand>
        <name>FAD</name>
        <dbReference type="ChEBI" id="CHEBI:57692"/>
    </ligand>
</feature>
<feature type="binding site" evidence="1">
    <location>
        <begin position="389"/>
        <end position="390"/>
    </location>
    <ligand>
        <name>NADP(+)</name>
        <dbReference type="ChEBI" id="CHEBI:58349"/>
    </ligand>
</feature>
<feature type="binding site" evidence="1">
    <location>
        <begin position="395"/>
        <end position="399"/>
    </location>
    <ligand>
        <name>NADP(+)</name>
        <dbReference type="ChEBI" id="CHEBI:58349"/>
    </ligand>
</feature>
<comment type="function">
    <text evidence="5">NADH-cytochrome b5 reductase-like protein; part of the gene cluster that mediates the biosynthesis of asperlin, a polyketide showing anti-inflammatory, antitumor and antibiotic activities (PubMed:30339758). The first step of the asperlin biosynthesis is the production of the intermediate 2,4,6-octatrienoic acid by the highly redusing polyketide synthase alnA with cleavage of the PKS product by the esterase alnB (PubMed:30339758). 2,4,6-octatrienoic acid is further converted to asperlin via several steps involving the remaining enzymes from the cluster (PubMed:30339758).</text>
</comment>
<comment type="cofactor">
    <cofactor evidence="1">
        <name>FAD</name>
        <dbReference type="ChEBI" id="CHEBI:57692"/>
    </cofactor>
    <text evidence="1">Binds 1 FAD per subunit.</text>
</comment>
<comment type="cofactor">
    <cofactor evidence="1">
        <name>FMN</name>
        <dbReference type="ChEBI" id="CHEBI:58210"/>
    </cofactor>
    <text evidence="1">Binds 1 FMN per subunit.</text>
</comment>
<comment type="pathway">
    <text evidence="5">Polyketide biosynthesis.</text>
</comment>
<comment type="subcellular location">
    <subcellularLocation>
        <location evidence="2">Membrane</location>
        <topology evidence="2">Multi-pass membrane protein</topology>
    </subcellularLocation>
</comment>
<comment type="induction">
    <text evidence="5">Expression is controlled by the asperlin biosynthesis cluster-specific transcription factor alnR.</text>
</comment>
<comment type="disruption phenotype">
    <text evidence="5">Fully eliminates the production of asperlin.</text>
</comment>
<comment type="similarity">
    <text evidence="7">Belongs to the flavoprotein pyridine nucleotide cytochrome reductase family.</text>
</comment>
<accession>C8VJR5</accession>
<protein>
    <recommendedName>
        <fullName evidence="6">NADH-cytochrome b5 reductase-like protein alnC</fullName>
        <ecNumber evidence="8">1.6.2.-</ecNumber>
    </recommendedName>
    <alternativeName>
        <fullName evidence="6">Asperlin biosynthesis cluster protein C</fullName>
    </alternativeName>
</protein>